<reference key="1">
    <citation type="journal article" date="2008" name="J. Biotechnol.">
        <title>The genome of Xanthomonas campestris pv. campestris B100 and its use for the reconstruction of metabolic pathways involved in xanthan biosynthesis.</title>
        <authorList>
            <person name="Vorhoelter F.-J."/>
            <person name="Schneiker S."/>
            <person name="Goesmann A."/>
            <person name="Krause L."/>
            <person name="Bekel T."/>
            <person name="Kaiser O."/>
            <person name="Linke B."/>
            <person name="Patschkowski T."/>
            <person name="Rueckert C."/>
            <person name="Schmid J."/>
            <person name="Sidhu V.K."/>
            <person name="Sieber V."/>
            <person name="Tauch A."/>
            <person name="Watt S.A."/>
            <person name="Weisshaar B."/>
            <person name="Becker A."/>
            <person name="Niehaus K."/>
            <person name="Puehler A."/>
        </authorList>
    </citation>
    <scope>NUCLEOTIDE SEQUENCE [LARGE SCALE GENOMIC DNA]</scope>
    <source>
        <strain>B100</strain>
    </source>
</reference>
<protein>
    <recommendedName>
        <fullName evidence="1">Phosphoadenosine 5'-phosphosulfate reductase</fullName>
        <shortName evidence="1">PAPS reductase</shortName>
        <ecNumber evidence="1">1.8.4.8</ecNumber>
    </recommendedName>
    <alternativeName>
        <fullName evidence="1">3'-phosphoadenylylsulfate reductase</fullName>
    </alternativeName>
    <alternativeName>
        <fullName evidence="1">PAPS reductase, thioredoxin dependent</fullName>
    </alternativeName>
    <alternativeName>
        <fullName evidence="1">PAPS sulfotransferase</fullName>
    </alternativeName>
    <alternativeName>
        <fullName evidence="1">PAdoPS reductase</fullName>
    </alternativeName>
</protein>
<dbReference type="EC" id="1.8.4.8" evidence="1"/>
<dbReference type="EMBL" id="AM920689">
    <property type="protein sequence ID" value="CAP50350.1"/>
    <property type="molecule type" value="Genomic_DNA"/>
</dbReference>
<dbReference type="SMR" id="B0RPG5"/>
<dbReference type="KEGG" id="xca:xcc-b100_1002"/>
<dbReference type="HOGENOM" id="CLU_044089_3_0_6"/>
<dbReference type="UniPathway" id="UPA00140">
    <property type="reaction ID" value="UER00206"/>
</dbReference>
<dbReference type="Proteomes" id="UP000001188">
    <property type="component" value="Chromosome"/>
</dbReference>
<dbReference type="GO" id="GO:0005737">
    <property type="term" value="C:cytoplasm"/>
    <property type="evidence" value="ECO:0007669"/>
    <property type="project" value="UniProtKB-SubCell"/>
</dbReference>
<dbReference type="GO" id="GO:0004604">
    <property type="term" value="F:phosphoadenylyl-sulfate reductase (thioredoxin) activity"/>
    <property type="evidence" value="ECO:0007669"/>
    <property type="project" value="UniProtKB-UniRule"/>
</dbReference>
<dbReference type="GO" id="GO:0070814">
    <property type="term" value="P:hydrogen sulfide biosynthetic process"/>
    <property type="evidence" value="ECO:0007669"/>
    <property type="project" value="UniProtKB-UniRule"/>
</dbReference>
<dbReference type="GO" id="GO:0019379">
    <property type="term" value="P:sulfate assimilation, phosphoadenylyl sulfate reduction by phosphoadenylyl-sulfate reductase (thioredoxin)"/>
    <property type="evidence" value="ECO:0007669"/>
    <property type="project" value="UniProtKB-UniRule"/>
</dbReference>
<dbReference type="CDD" id="cd23945">
    <property type="entry name" value="PAPS_reductase"/>
    <property type="match status" value="1"/>
</dbReference>
<dbReference type="FunFam" id="3.40.50.620:FF:000043">
    <property type="entry name" value="Phosphoadenosine phosphosulfate reductase"/>
    <property type="match status" value="1"/>
</dbReference>
<dbReference type="Gene3D" id="3.40.50.620">
    <property type="entry name" value="HUPs"/>
    <property type="match status" value="1"/>
</dbReference>
<dbReference type="HAMAP" id="MF_00063">
    <property type="entry name" value="CysH"/>
    <property type="match status" value="1"/>
</dbReference>
<dbReference type="InterPro" id="IPR004511">
    <property type="entry name" value="PAPS/APS_Rdtase"/>
</dbReference>
<dbReference type="InterPro" id="IPR002500">
    <property type="entry name" value="PAPS_reduct_dom"/>
</dbReference>
<dbReference type="InterPro" id="IPR011800">
    <property type="entry name" value="PAPS_reductase_CysH"/>
</dbReference>
<dbReference type="InterPro" id="IPR014729">
    <property type="entry name" value="Rossmann-like_a/b/a_fold"/>
</dbReference>
<dbReference type="NCBIfam" id="TIGR00434">
    <property type="entry name" value="cysH"/>
    <property type="match status" value="1"/>
</dbReference>
<dbReference type="NCBIfam" id="TIGR02057">
    <property type="entry name" value="PAPS_reductase"/>
    <property type="match status" value="1"/>
</dbReference>
<dbReference type="NCBIfam" id="NF002537">
    <property type="entry name" value="PRK02090.1"/>
    <property type="match status" value="1"/>
</dbReference>
<dbReference type="PANTHER" id="PTHR46509">
    <property type="entry name" value="PHOSPHOADENOSINE PHOSPHOSULFATE REDUCTASE"/>
    <property type="match status" value="1"/>
</dbReference>
<dbReference type="PANTHER" id="PTHR46509:SF1">
    <property type="entry name" value="PHOSPHOADENOSINE PHOSPHOSULFATE REDUCTASE"/>
    <property type="match status" value="1"/>
</dbReference>
<dbReference type="Pfam" id="PF01507">
    <property type="entry name" value="PAPS_reduct"/>
    <property type="match status" value="1"/>
</dbReference>
<dbReference type="PIRSF" id="PIRSF000857">
    <property type="entry name" value="PAPS_reductase"/>
    <property type="match status" value="1"/>
</dbReference>
<dbReference type="SUPFAM" id="SSF52402">
    <property type="entry name" value="Adenine nucleotide alpha hydrolases-like"/>
    <property type="match status" value="1"/>
</dbReference>
<evidence type="ECO:0000255" key="1">
    <source>
        <dbReference type="HAMAP-Rule" id="MF_00063"/>
    </source>
</evidence>
<name>CYSH_XANCB</name>
<keyword id="KW-0963">Cytoplasm</keyword>
<keyword id="KW-0560">Oxidoreductase</keyword>
<accession>B0RPG5</accession>
<organism>
    <name type="scientific">Xanthomonas campestris pv. campestris (strain B100)</name>
    <dbReference type="NCBI Taxonomy" id="509169"/>
    <lineage>
        <taxon>Bacteria</taxon>
        <taxon>Pseudomonadati</taxon>
        <taxon>Pseudomonadota</taxon>
        <taxon>Gammaproteobacteria</taxon>
        <taxon>Lysobacterales</taxon>
        <taxon>Lysobacteraceae</taxon>
        <taxon>Xanthomonas</taxon>
    </lineage>
</organism>
<comment type="function">
    <text evidence="1">Catalyzes the formation of sulfite from phosphoadenosine 5'-phosphosulfate (PAPS) using thioredoxin as an electron donor.</text>
</comment>
<comment type="catalytic activity">
    <reaction evidence="1">
        <text>[thioredoxin]-disulfide + sulfite + adenosine 3',5'-bisphosphate + 2 H(+) = [thioredoxin]-dithiol + 3'-phosphoadenylyl sulfate</text>
        <dbReference type="Rhea" id="RHEA:11724"/>
        <dbReference type="Rhea" id="RHEA-COMP:10698"/>
        <dbReference type="Rhea" id="RHEA-COMP:10700"/>
        <dbReference type="ChEBI" id="CHEBI:15378"/>
        <dbReference type="ChEBI" id="CHEBI:17359"/>
        <dbReference type="ChEBI" id="CHEBI:29950"/>
        <dbReference type="ChEBI" id="CHEBI:50058"/>
        <dbReference type="ChEBI" id="CHEBI:58339"/>
        <dbReference type="ChEBI" id="CHEBI:58343"/>
        <dbReference type="EC" id="1.8.4.8"/>
    </reaction>
</comment>
<comment type="pathway">
    <text evidence="1">Sulfur metabolism; hydrogen sulfide biosynthesis; sulfite from sulfate: step 3/3.</text>
</comment>
<comment type="subcellular location">
    <subcellularLocation>
        <location evidence="1">Cytoplasm</location>
    </subcellularLocation>
</comment>
<comment type="similarity">
    <text evidence="1">Belongs to the PAPS reductase family. CysH subfamily.</text>
</comment>
<gene>
    <name evidence="1" type="primary">cysH</name>
    <name type="ordered locus">xcc-b100_1002</name>
</gene>
<feature type="chain" id="PRO_1000092190" description="Phosphoadenosine 5'-phosphosulfate reductase">
    <location>
        <begin position="1"/>
        <end position="241"/>
    </location>
</feature>
<feature type="active site" description="Nucleophile; cysteine thiosulfonate intermediate" evidence="1">
    <location>
        <position position="235"/>
    </location>
</feature>
<proteinExistence type="inferred from homology"/>
<sequence>MTALPATSIAAPSLDDLDALNAHLETLRADERVAWALQHGPQQAALSSSFGAQSAVTLHLLTQQRPDIPVILIDTGYLFPETYRFADALTERLSLNLQVYRPLVSRAWMEARHGRLWEQGMVGIDQYNNLRKVEPMRRALDELNVGTWFTGLRRSQSGGRAQTPIVQKRGDRYKISPIADWTDRDVWQYLQAHALPYHPLWEQGYVSIGDFHTTRRWEPGMREEDTRFFGLKRECGIHEDI</sequence>